<proteinExistence type="inferred from homology"/>
<geneLocation type="chloroplast"/>
<sequence length="61" mass="7085">MAVPKKRTSMSKKRIRKNIWKKKTYFSIVHSYSLAKSRSFSSGNEHPKPKGFSGQQQQTNK</sequence>
<organism>
    <name type="scientific">Agrostis stolonifera</name>
    <name type="common">Creeping bentgrass</name>
    <dbReference type="NCBI Taxonomy" id="63632"/>
    <lineage>
        <taxon>Eukaryota</taxon>
        <taxon>Viridiplantae</taxon>
        <taxon>Streptophyta</taxon>
        <taxon>Embryophyta</taxon>
        <taxon>Tracheophyta</taxon>
        <taxon>Spermatophyta</taxon>
        <taxon>Magnoliopsida</taxon>
        <taxon>Liliopsida</taxon>
        <taxon>Poales</taxon>
        <taxon>Poaceae</taxon>
        <taxon>BOP clade</taxon>
        <taxon>Pooideae</taxon>
        <taxon>Poodae</taxon>
        <taxon>Poeae</taxon>
        <taxon>Poeae Chloroplast Group 1 (Aveneae type)</taxon>
        <taxon>Agrostidodinae</taxon>
        <taxon>Agrostidinae</taxon>
        <taxon>Agrostis</taxon>
    </lineage>
</organism>
<feature type="chain" id="PRO_0000276461" description="Large ribosomal subunit protein bL32c">
    <location>
        <begin position="1"/>
        <end position="61"/>
    </location>
</feature>
<feature type="region of interest" description="Disordered" evidence="2">
    <location>
        <begin position="37"/>
        <end position="61"/>
    </location>
</feature>
<evidence type="ECO:0000255" key="1">
    <source>
        <dbReference type="HAMAP-Rule" id="MF_00340"/>
    </source>
</evidence>
<evidence type="ECO:0000256" key="2">
    <source>
        <dbReference type="SAM" id="MobiDB-lite"/>
    </source>
</evidence>
<evidence type="ECO:0000305" key="3"/>
<comment type="subcellular location">
    <subcellularLocation>
        <location>Plastid</location>
        <location>Chloroplast</location>
    </subcellularLocation>
</comment>
<comment type="similarity">
    <text evidence="1">Belongs to the bacterial ribosomal protein bL32 family.</text>
</comment>
<accession>A1EA57</accession>
<protein>
    <recommendedName>
        <fullName evidence="1">Large ribosomal subunit protein bL32c</fullName>
    </recommendedName>
    <alternativeName>
        <fullName evidence="3">50S ribosomal protein L32, chloroplastic</fullName>
    </alternativeName>
</protein>
<dbReference type="EMBL" id="EF115543">
    <property type="protein sequence ID" value="ABK79629.1"/>
    <property type="molecule type" value="Genomic_DNA"/>
</dbReference>
<dbReference type="RefSeq" id="YP_874785.1">
    <property type="nucleotide sequence ID" value="NC_008591.1"/>
</dbReference>
<dbReference type="SMR" id="A1EA57"/>
<dbReference type="GeneID" id="4525033"/>
<dbReference type="GO" id="GO:0009507">
    <property type="term" value="C:chloroplast"/>
    <property type="evidence" value="ECO:0007669"/>
    <property type="project" value="UniProtKB-SubCell"/>
</dbReference>
<dbReference type="GO" id="GO:0015934">
    <property type="term" value="C:large ribosomal subunit"/>
    <property type="evidence" value="ECO:0007669"/>
    <property type="project" value="InterPro"/>
</dbReference>
<dbReference type="GO" id="GO:0003735">
    <property type="term" value="F:structural constituent of ribosome"/>
    <property type="evidence" value="ECO:0007669"/>
    <property type="project" value="InterPro"/>
</dbReference>
<dbReference type="GO" id="GO:0006412">
    <property type="term" value="P:translation"/>
    <property type="evidence" value="ECO:0007669"/>
    <property type="project" value="UniProtKB-UniRule"/>
</dbReference>
<dbReference type="HAMAP" id="MF_00340">
    <property type="entry name" value="Ribosomal_bL32"/>
    <property type="match status" value="1"/>
</dbReference>
<dbReference type="InterPro" id="IPR002677">
    <property type="entry name" value="Ribosomal_bL32"/>
</dbReference>
<dbReference type="InterPro" id="IPR044958">
    <property type="entry name" value="Ribosomal_bL32_plant/cyanobact"/>
</dbReference>
<dbReference type="InterPro" id="IPR011332">
    <property type="entry name" value="Ribosomal_zn-bd"/>
</dbReference>
<dbReference type="PANTHER" id="PTHR36083">
    <property type="entry name" value="50S RIBOSOMAL PROTEIN L32, CHLOROPLASTIC"/>
    <property type="match status" value="1"/>
</dbReference>
<dbReference type="PANTHER" id="PTHR36083:SF1">
    <property type="entry name" value="LARGE RIBOSOMAL SUBUNIT PROTEIN BL32C"/>
    <property type="match status" value="1"/>
</dbReference>
<dbReference type="Pfam" id="PF01783">
    <property type="entry name" value="Ribosomal_L32p"/>
    <property type="match status" value="1"/>
</dbReference>
<dbReference type="SUPFAM" id="SSF57829">
    <property type="entry name" value="Zn-binding ribosomal proteins"/>
    <property type="match status" value="1"/>
</dbReference>
<name>RK32_AGRST</name>
<gene>
    <name evidence="1" type="primary">rpl32</name>
</gene>
<reference key="1">
    <citation type="journal article" date="2007" name="Theor. Appl. Genet.">
        <title>Complete chloroplast genome sequences of Hordeum vulgare, Sorghum bicolor and Agrostis stolonifera, and comparative analyses with other grass genomes.</title>
        <authorList>
            <person name="Saski C."/>
            <person name="Lee S.-B."/>
            <person name="Fjellheim S."/>
            <person name="Guda C."/>
            <person name="Jansen R.K."/>
            <person name="Luo H."/>
            <person name="Tomkins J."/>
            <person name="Rognli O.A."/>
            <person name="Daniell H."/>
            <person name="Clarke J.L."/>
        </authorList>
    </citation>
    <scope>NUCLEOTIDE SEQUENCE [LARGE SCALE GENOMIC DNA]</scope>
    <source>
        <strain>cv. Penn A-4</strain>
    </source>
</reference>
<keyword id="KW-0150">Chloroplast</keyword>
<keyword id="KW-0934">Plastid</keyword>
<keyword id="KW-0687">Ribonucleoprotein</keyword>
<keyword id="KW-0689">Ribosomal protein</keyword>